<sequence length="423" mass="48822">MKLYSLGVLVATVLFCGEHAFAFQRGQVLSALPRTSRQVQILQNVTTTYKIVLWQPVAAEYIVKGYEVHFFVNASDVSNVKAHLNASRIPFRVLVENVEDLIRQQTSNDTISPRASSSYYEQYHSLNEIYSWIEVMTERYPDMVEKIHIGSSYEKYPLYVLKVSKKEQRAKNAMWIDCGIHAREWISPAFCLWFVGSVTYYYGKEKMHTNLLKHMDFYIMPVVNVDGYDYTWKKDRMWRKNRSLHEKNACVGTDLNRNFASKHWCGEGASSSSCSEIYCGTYPESEPEVKAVADFLRRNIKHIKAYISMHSYSQKIVFPYSYSRSRSKDHEELSLVAREAVFAMENIHRNIRYTHGSGSESLYLAPGGSDDWIYDLGIKYSFTFELRDKGKYGFLLPESYIRPTCSEALVAVAKIASHVVKNV</sequence>
<name>CBPB2_BOVIN</name>
<protein>
    <recommendedName>
        <fullName>Carboxypeptidase B2</fullName>
        <ecNumber>3.4.17.20</ecNumber>
    </recommendedName>
    <alternativeName>
        <fullName>Carboxypeptidase U</fullName>
        <shortName>CPU</shortName>
    </alternativeName>
    <alternativeName>
        <fullName>Plasma carboxypeptidase B</fullName>
        <shortName>pCPB</shortName>
    </alternativeName>
    <alternativeName>
        <fullName>Thrombin-activable fibrinolysis inhibitor</fullName>
        <shortName>TAFI</shortName>
    </alternativeName>
</protein>
<keyword id="KW-0002">3D-structure</keyword>
<keyword id="KW-0094">Blood coagulation</keyword>
<keyword id="KW-0121">Carboxypeptidase</keyword>
<keyword id="KW-1015">Disulfide bond</keyword>
<keyword id="KW-0280">Fibrinolysis</keyword>
<keyword id="KW-0325">Glycoprotein</keyword>
<keyword id="KW-0356">Hemostasis</keyword>
<keyword id="KW-0378">Hydrolase</keyword>
<keyword id="KW-0479">Metal-binding</keyword>
<keyword id="KW-0482">Metalloprotease</keyword>
<keyword id="KW-0645">Protease</keyword>
<keyword id="KW-1185">Reference proteome</keyword>
<keyword id="KW-0964">Secreted</keyword>
<keyword id="KW-0732">Signal</keyword>
<keyword id="KW-0862">Zinc</keyword>
<keyword id="KW-0865">Zymogen</keyword>
<evidence type="ECO:0000250" key="1"/>
<evidence type="ECO:0000250" key="2">
    <source>
        <dbReference type="UniProtKB" id="P00730"/>
    </source>
</evidence>
<evidence type="ECO:0000250" key="3">
    <source>
        <dbReference type="UniProtKB" id="Q9JHH6"/>
    </source>
</evidence>
<evidence type="ECO:0000255" key="4"/>
<evidence type="ECO:0000255" key="5">
    <source>
        <dbReference type="PROSITE-ProRule" id="PRU01379"/>
    </source>
</evidence>
<evidence type="ECO:0000269" key="6">
    <source>
    </source>
</evidence>
<evidence type="ECO:0000305" key="7"/>
<evidence type="ECO:0007829" key="8">
    <source>
        <dbReference type="PDB" id="3D4U"/>
    </source>
</evidence>
<evidence type="ECO:0007829" key="9">
    <source>
        <dbReference type="PDB" id="3DGV"/>
    </source>
</evidence>
<reference key="1">
    <citation type="submission" date="2006-01" db="EMBL/GenBank/DDBJ databases">
        <authorList>
            <consortium name="NIH - Mammalian Gene Collection (MGC) project"/>
        </authorList>
    </citation>
    <scope>NUCLEOTIDE SEQUENCE [LARGE SCALE MRNA]</scope>
    <source>
        <strain>Hereford</strain>
        <tissue>Testis</tissue>
    </source>
</reference>
<reference key="2">
    <citation type="journal article" date="2008" name="J. Biol. Chem.">
        <title>The crystal structure of thrombin-activable fibrinolysis inhibitor (TAFI) provides the structural basis for its intrinsic activity and the short half-life of TAFIa.</title>
        <authorList>
            <person name="Anand K."/>
            <person name="Pallares I."/>
            <person name="Valnickova Z."/>
            <person name="Christensen T."/>
            <person name="Vendrell J."/>
            <person name="Wendt K.U."/>
            <person name="Schreuder H.A."/>
            <person name="Enghild J.J."/>
            <person name="Aviles F.X."/>
        </authorList>
    </citation>
    <scope>X-RAY CRYSTALLOGRAPHY (2.5 ANGSTROMS) OF 23-423 IN COMPLEX WITH ZINC IONS</scope>
    <scope>GLYCOSYLATION AT ASN-44; ASN-73; ASN-85 AND ASN-108</scope>
    <scope>ACTIVE SITE</scope>
    <scope>ZINC-BINDING SITES</scope>
    <scope>DISULFIDE BONDS</scope>
    <scope>COFACTOR</scope>
</reference>
<organism>
    <name type="scientific">Bos taurus</name>
    <name type="common">Bovine</name>
    <dbReference type="NCBI Taxonomy" id="9913"/>
    <lineage>
        <taxon>Eukaryota</taxon>
        <taxon>Metazoa</taxon>
        <taxon>Chordata</taxon>
        <taxon>Craniata</taxon>
        <taxon>Vertebrata</taxon>
        <taxon>Euteleostomi</taxon>
        <taxon>Mammalia</taxon>
        <taxon>Eutheria</taxon>
        <taxon>Laurasiatheria</taxon>
        <taxon>Artiodactyla</taxon>
        <taxon>Ruminantia</taxon>
        <taxon>Pecora</taxon>
        <taxon>Bovidae</taxon>
        <taxon>Bovinae</taxon>
        <taxon>Bos</taxon>
    </lineage>
</organism>
<gene>
    <name type="primary">CPB2</name>
</gene>
<comment type="function">
    <text>Cleaves C-terminal arginine or lysine residues from biologically active peptides such as kinins or anaphylatoxins in the circulation thereby regulating their activities. Down-regulates fibrinolysis by removing C-terminal lysine residues from fibrin that has already been partially degraded by plasmin.</text>
</comment>
<comment type="catalytic activity">
    <reaction>
        <text>Release of C-terminal Arg and Lys from a polypeptide.</text>
        <dbReference type="EC" id="3.4.17.20"/>
    </reaction>
</comment>
<comment type="cofactor">
    <cofactor evidence="6">
        <name>Zn(2+)</name>
        <dbReference type="ChEBI" id="CHEBI:29105"/>
    </cofactor>
    <text evidence="6">Binds 1 zinc ion per subunit.</text>
</comment>
<comment type="activity regulation">
    <text evidence="1">TAFI/CPB2 is unique among carboxypeptidases in that it spontaneously inactivates with a short half-life, a property that is crucial for its role in controlling blood clot lysis. The zymogen is stabilized by interactions with the activation peptide. Release of the activation peptide increases a dynamic flap mobility and in time this leads to conformational changes that disrupt the catalytic site and expose a cryptic thrombin-cleavage site present at Arg-324 (By similarity).</text>
</comment>
<comment type="subcellular location">
    <subcellularLocation>
        <location evidence="3">Secreted</location>
    </subcellularLocation>
</comment>
<comment type="similarity">
    <text evidence="7">Belongs to the peptidase M14 family.</text>
</comment>
<feature type="signal peptide" evidence="4">
    <location>
        <begin position="1"/>
        <end position="22"/>
    </location>
</feature>
<feature type="propeptide" id="PRO_0000282869" description="Activation peptide">
    <location>
        <begin position="23"/>
        <end position="114"/>
    </location>
</feature>
<feature type="chain" id="PRO_0000282870" description="Carboxypeptidase B2">
    <location>
        <begin position="115"/>
        <end position="423"/>
    </location>
</feature>
<feature type="domain" description="Peptidase M14" evidence="5">
    <location>
        <begin position="122"/>
        <end position="419"/>
    </location>
</feature>
<feature type="active site" description="Proton donor/acceptor" evidence="5">
    <location>
        <position position="385"/>
    </location>
</feature>
<feature type="binding site" evidence="2">
    <location>
        <begin position="181"/>
        <end position="184"/>
    </location>
    <ligand>
        <name>substrate</name>
    </ligand>
</feature>
<feature type="binding site" evidence="5 6">
    <location>
        <position position="181"/>
    </location>
    <ligand>
        <name>Zn(2+)</name>
        <dbReference type="ChEBI" id="CHEBI:29105"/>
        <note>catalytic</note>
    </ligand>
</feature>
<feature type="binding site" evidence="5 6">
    <location>
        <position position="184"/>
    </location>
    <ligand>
        <name>Zn(2+)</name>
        <dbReference type="ChEBI" id="CHEBI:29105"/>
        <note>catalytic</note>
    </ligand>
</feature>
<feature type="binding site" evidence="2">
    <location>
        <position position="239"/>
    </location>
    <ligand>
        <name>substrate</name>
    </ligand>
</feature>
<feature type="binding site" evidence="2">
    <location>
        <begin position="256"/>
        <end position="257"/>
    </location>
    <ligand>
        <name>substrate</name>
    </ligand>
</feature>
<feature type="binding site" evidence="5 6">
    <location>
        <position position="310"/>
    </location>
    <ligand>
        <name>Zn(2+)</name>
        <dbReference type="ChEBI" id="CHEBI:29105"/>
        <note>catalytic</note>
    </ligand>
</feature>
<feature type="binding site" evidence="2">
    <location>
        <begin position="311"/>
        <end position="312"/>
    </location>
    <ligand>
        <name>substrate</name>
    </ligand>
</feature>
<feature type="binding site" evidence="2">
    <location>
        <position position="363"/>
    </location>
    <ligand>
        <name>substrate</name>
    </ligand>
</feature>
<feature type="site" description="Cleavage; by thrombin" evidence="1">
    <location>
        <begin position="324"/>
        <end position="325"/>
    </location>
</feature>
<feature type="glycosylation site" description="N-linked (GlcNAc...) asparagine" evidence="6">
    <location>
        <position position="44"/>
    </location>
</feature>
<feature type="glycosylation site" description="N-linked (GlcNAc...) asparagine" evidence="6">
    <location>
        <position position="73"/>
    </location>
</feature>
<feature type="glycosylation site" description="N-linked (GlcNAc...) asparagine" evidence="6">
    <location>
        <position position="85"/>
    </location>
</feature>
<feature type="glycosylation site" description="N-linked (GlcNAc...) asparagine" evidence="6">
    <location>
        <position position="108"/>
    </location>
</feature>
<feature type="glycosylation site" description="N-linked (GlcNAc...) asparagine" evidence="4">
    <location>
        <position position="241"/>
    </location>
</feature>
<feature type="disulfide bond" evidence="6">
    <location>
        <begin position="178"/>
        <end position="191"/>
    </location>
</feature>
<feature type="disulfide bond" evidence="6">
    <location>
        <begin position="250"/>
        <end position="274"/>
    </location>
</feature>
<feature type="disulfide bond" evidence="6">
    <location>
        <begin position="265"/>
        <end position="279"/>
    </location>
</feature>
<feature type="strand" evidence="9">
    <location>
        <begin position="26"/>
        <end position="31"/>
    </location>
</feature>
<feature type="helix" evidence="9">
    <location>
        <begin position="36"/>
        <end position="48"/>
    </location>
</feature>
<feature type="strand" evidence="9">
    <location>
        <begin position="49"/>
        <end position="58"/>
    </location>
</feature>
<feature type="helix" evidence="9">
    <location>
        <begin position="59"/>
        <end position="61"/>
    </location>
</feature>
<feature type="strand" evidence="9">
    <location>
        <begin position="68"/>
        <end position="73"/>
    </location>
</feature>
<feature type="helix" evidence="9">
    <location>
        <begin position="74"/>
        <end position="76"/>
    </location>
</feature>
<feature type="helix" evidence="9">
    <location>
        <begin position="77"/>
        <end position="86"/>
    </location>
</feature>
<feature type="strand" evidence="9">
    <location>
        <begin position="91"/>
        <end position="96"/>
    </location>
</feature>
<feature type="helix" evidence="9">
    <location>
        <begin position="98"/>
        <end position="105"/>
    </location>
</feature>
<feature type="turn" evidence="9">
    <location>
        <begin position="106"/>
        <end position="108"/>
    </location>
</feature>
<feature type="strand" evidence="9">
    <location>
        <begin position="109"/>
        <end position="112"/>
    </location>
</feature>
<feature type="helix" evidence="8">
    <location>
        <begin position="119"/>
        <end position="121"/>
    </location>
</feature>
<feature type="helix" evidence="8">
    <location>
        <begin position="126"/>
        <end position="139"/>
    </location>
</feature>
<feature type="turn" evidence="8">
    <location>
        <begin position="141"/>
        <end position="143"/>
    </location>
</feature>
<feature type="strand" evidence="8">
    <location>
        <begin position="144"/>
        <end position="151"/>
    </location>
</feature>
<feature type="strand" evidence="8">
    <location>
        <begin position="157"/>
        <end position="163"/>
    </location>
</feature>
<feature type="strand" evidence="8">
    <location>
        <begin position="173"/>
        <end position="177"/>
    </location>
</feature>
<feature type="helix" evidence="8">
    <location>
        <begin position="186"/>
        <end position="200"/>
    </location>
</feature>
<feature type="turn" evidence="9">
    <location>
        <begin position="202"/>
        <end position="204"/>
    </location>
</feature>
<feature type="helix" evidence="9">
    <location>
        <begin position="206"/>
        <end position="214"/>
    </location>
</feature>
<feature type="strand" evidence="8">
    <location>
        <begin position="216"/>
        <end position="221"/>
    </location>
</feature>
<feature type="helix" evidence="8">
    <location>
        <begin position="225"/>
        <end position="233"/>
    </location>
</feature>
<feature type="helix" evidence="8">
    <location>
        <begin position="255"/>
        <end position="257"/>
    </location>
</feature>
<feature type="turn" evidence="8">
    <location>
        <begin position="262"/>
        <end position="265"/>
    </location>
</feature>
<feature type="strand" evidence="8">
    <location>
        <begin position="269"/>
        <end position="271"/>
    </location>
</feature>
<feature type="helix" evidence="8">
    <location>
        <begin position="287"/>
        <end position="298"/>
    </location>
</feature>
<feature type="turn" evidence="8">
    <location>
        <begin position="299"/>
        <end position="302"/>
    </location>
</feature>
<feature type="strand" evidence="8">
    <location>
        <begin position="303"/>
        <end position="310"/>
    </location>
</feature>
<feature type="strand" evidence="8">
    <location>
        <begin position="312"/>
        <end position="319"/>
    </location>
</feature>
<feature type="strand" evidence="9">
    <location>
        <begin position="321"/>
        <end position="325"/>
    </location>
</feature>
<feature type="helix" evidence="8">
    <location>
        <begin position="330"/>
        <end position="347"/>
    </location>
</feature>
<feature type="strand" evidence="8">
    <location>
        <begin position="354"/>
        <end position="357"/>
    </location>
</feature>
<feature type="helix" evidence="8">
    <location>
        <begin position="358"/>
        <end position="361"/>
    </location>
</feature>
<feature type="helix" evidence="8">
    <location>
        <begin position="369"/>
        <end position="376"/>
    </location>
</feature>
<feature type="strand" evidence="8">
    <location>
        <begin position="379"/>
        <end position="385"/>
    </location>
</feature>
<feature type="strand" evidence="8">
    <location>
        <begin position="389"/>
        <end position="392"/>
    </location>
</feature>
<feature type="helix" evidence="8">
    <location>
        <begin position="398"/>
        <end position="400"/>
    </location>
</feature>
<feature type="helix" evidence="8">
    <location>
        <begin position="401"/>
        <end position="422"/>
    </location>
</feature>
<accession>Q2KIG3</accession>
<dbReference type="EC" id="3.4.17.20"/>
<dbReference type="EMBL" id="BC112649">
    <property type="protein sequence ID" value="AAI12650.1"/>
    <property type="molecule type" value="mRNA"/>
</dbReference>
<dbReference type="RefSeq" id="NP_001039462.1">
    <property type="nucleotide sequence ID" value="NM_001045997.2"/>
</dbReference>
<dbReference type="PDB" id="3D4U">
    <property type="method" value="X-ray"/>
    <property type="resolution" value="1.70 A"/>
    <property type="chains" value="A=115-423"/>
</dbReference>
<dbReference type="PDB" id="3DGV">
    <property type="method" value="X-ray"/>
    <property type="resolution" value="2.50 A"/>
    <property type="chains" value="A/B/C=23-423"/>
</dbReference>
<dbReference type="PDB" id="3OSL">
    <property type="method" value="X-ray"/>
    <property type="resolution" value="6.00 A"/>
    <property type="chains" value="A/C=23-423"/>
</dbReference>
<dbReference type="PDBsum" id="3D4U"/>
<dbReference type="PDBsum" id="3DGV"/>
<dbReference type="PDBsum" id="3OSL"/>
<dbReference type="SMR" id="Q2KIG3"/>
<dbReference type="FunCoup" id="Q2KIG3">
    <property type="interactions" value="252"/>
</dbReference>
<dbReference type="STRING" id="9913.ENSBTAP00000009300"/>
<dbReference type="MEROPS" id="M14.009"/>
<dbReference type="GlyCosmos" id="Q2KIG3">
    <property type="glycosylation" value="5 sites, No reported glycans"/>
</dbReference>
<dbReference type="GlyGen" id="Q2KIG3">
    <property type="glycosylation" value="5 sites"/>
</dbReference>
<dbReference type="iPTMnet" id="Q2KIG3"/>
<dbReference type="PaxDb" id="9913-ENSBTAP00000009300"/>
<dbReference type="GeneID" id="508222"/>
<dbReference type="KEGG" id="bta:508222"/>
<dbReference type="CTD" id="1361"/>
<dbReference type="VEuPathDB" id="HostDB:ENSBTAG00000007073"/>
<dbReference type="eggNOG" id="KOG2650">
    <property type="taxonomic scope" value="Eukaryota"/>
</dbReference>
<dbReference type="HOGENOM" id="CLU_019326_0_0_1"/>
<dbReference type="InParanoid" id="Q2KIG3"/>
<dbReference type="OMA" id="IGHITEY"/>
<dbReference type="OrthoDB" id="3626597at2759"/>
<dbReference type="TreeFam" id="TF317197"/>
<dbReference type="BRENDA" id="3.4.17.20">
    <property type="organism ID" value="908"/>
</dbReference>
<dbReference type="Reactome" id="R-BTA-2022377">
    <property type="pathway name" value="Metabolism of Angiotensinogen to Angiotensins"/>
</dbReference>
<dbReference type="Reactome" id="R-BTA-977606">
    <property type="pathway name" value="Regulation of Complement cascade"/>
</dbReference>
<dbReference type="EvolutionaryTrace" id="Q2KIG3"/>
<dbReference type="Proteomes" id="UP000009136">
    <property type="component" value="Chromosome 12"/>
</dbReference>
<dbReference type="Bgee" id="ENSBTAG00000007073">
    <property type="expression patterns" value="Expressed in liver and 30 other cell types or tissues"/>
</dbReference>
<dbReference type="GO" id="GO:0005615">
    <property type="term" value="C:extracellular space"/>
    <property type="evidence" value="ECO:0000318"/>
    <property type="project" value="GO_Central"/>
</dbReference>
<dbReference type="GO" id="GO:0004181">
    <property type="term" value="F:metallocarboxypeptidase activity"/>
    <property type="evidence" value="ECO:0000318"/>
    <property type="project" value="GO_Central"/>
</dbReference>
<dbReference type="GO" id="GO:0008270">
    <property type="term" value="F:zinc ion binding"/>
    <property type="evidence" value="ECO:0007669"/>
    <property type="project" value="InterPro"/>
</dbReference>
<dbReference type="GO" id="GO:0007596">
    <property type="term" value="P:blood coagulation"/>
    <property type="evidence" value="ECO:0007669"/>
    <property type="project" value="UniProtKB-KW"/>
</dbReference>
<dbReference type="GO" id="GO:0042730">
    <property type="term" value="P:fibrinolysis"/>
    <property type="evidence" value="ECO:0000318"/>
    <property type="project" value="GO_Central"/>
</dbReference>
<dbReference type="GO" id="GO:0006508">
    <property type="term" value="P:proteolysis"/>
    <property type="evidence" value="ECO:0000318"/>
    <property type="project" value="GO_Central"/>
</dbReference>
<dbReference type="CDD" id="cd06246">
    <property type="entry name" value="M14_CPB2"/>
    <property type="match status" value="1"/>
</dbReference>
<dbReference type="DisProt" id="DP01424"/>
<dbReference type="FunFam" id="3.30.70.340:FF:000003">
    <property type="entry name" value="Carboxypeptidase B2"/>
    <property type="match status" value="1"/>
</dbReference>
<dbReference type="FunFam" id="3.40.630.10:FF:000084">
    <property type="entry name" value="Carboxypeptidase B2"/>
    <property type="match status" value="1"/>
</dbReference>
<dbReference type="Gene3D" id="3.30.70.340">
    <property type="entry name" value="Metallocarboxypeptidase-like"/>
    <property type="match status" value="1"/>
</dbReference>
<dbReference type="Gene3D" id="3.40.630.10">
    <property type="entry name" value="Zn peptidases"/>
    <property type="match status" value="1"/>
</dbReference>
<dbReference type="InterPro" id="IPR033849">
    <property type="entry name" value="CPB2"/>
</dbReference>
<dbReference type="InterPro" id="IPR036990">
    <property type="entry name" value="M14A-like_propep"/>
</dbReference>
<dbReference type="InterPro" id="IPR003146">
    <property type="entry name" value="M14A_act_pep"/>
</dbReference>
<dbReference type="InterPro" id="IPR000834">
    <property type="entry name" value="Peptidase_M14"/>
</dbReference>
<dbReference type="PANTHER" id="PTHR11705:SF17">
    <property type="entry name" value="CARBOXYPEPTIDASE B2"/>
    <property type="match status" value="1"/>
</dbReference>
<dbReference type="PANTHER" id="PTHR11705">
    <property type="entry name" value="PROTEASE FAMILY M14 CARBOXYPEPTIDASE A,B"/>
    <property type="match status" value="1"/>
</dbReference>
<dbReference type="Pfam" id="PF00246">
    <property type="entry name" value="Peptidase_M14"/>
    <property type="match status" value="1"/>
</dbReference>
<dbReference type="Pfam" id="PF02244">
    <property type="entry name" value="Propep_M14"/>
    <property type="match status" value="1"/>
</dbReference>
<dbReference type="PRINTS" id="PR00765">
    <property type="entry name" value="CRBOXYPTASEA"/>
</dbReference>
<dbReference type="SMART" id="SM00631">
    <property type="entry name" value="Zn_pept"/>
    <property type="match status" value="1"/>
</dbReference>
<dbReference type="SUPFAM" id="SSF54897">
    <property type="entry name" value="Protease propeptides/inhibitors"/>
    <property type="match status" value="1"/>
</dbReference>
<dbReference type="SUPFAM" id="SSF53187">
    <property type="entry name" value="Zn-dependent exopeptidases"/>
    <property type="match status" value="1"/>
</dbReference>
<dbReference type="PROSITE" id="PS52035">
    <property type="entry name" value="PEPTIDASE_M14"/>
    <property type="match status" value="1"/>
</dbReference>
<proteinExistence type="evidence at protein level"/>